<protein>
    <recommendedName>
        <fullName>Uncharacterized protein RP600 homolog</fullName>
    </recommendedName>
</protein>
<feature type="chain" id="PRO_0000101402" description="Uncharacterized protein RP600 homolog">
    <location>
        <begin position="1"/>
        <end position="123"/>
    </location>
</feature>
<feature type="domain" description="Rhodanese" evidence="1">
    <location>
        <begin position="17"/>
        <end position="117"/>
    </location>
</feature>
<dbReference type="EMBL" id="AJ293314">
    <property type="protein sequence ID" value="CAC33674.1"/>
    <property type="molecule type" value="Genomic_DNA"/>
</dbReference>
<dbReference type="RefSeq" id="WP_014362486.1">
    <property type="nucleotide sequence ID" value="NZ_CP098688.1"/>
</dbReference>
<dbReference type="SMR" id="Q9AKI4"/>
<dbReference type="CDD" id="cd01522">
    <property type="entry name" value="RHOD_1"/>
    <property type="match status" value="1"/>
</dbReference>
<dbReference type="Gene3D" id="3.40.250.10">
    <property type="entry name" value="Rhodanese-like domain"/>
    <property type="match status" value="1"/>
</dbReference>
<dbReference type="InterPro" id="IPR001763">
    <property type="entry name" value="Rhodanese-like_dom"/>
</dbReference>
<dbReference type="InterPro" id="IPR036873">
    <property type="entry name" value="Rhodanese-like_dom_sf"/>
</dbReference>
<dbReference type="InterPro" id="IPR044240">
    <property type="entry name" value="STR4-like"/>
</dbReference>
<dbReference type="PANTHER" id="PTHR47377">
    <property type="entry name" value="RHODANESE-LIKE DOMAIN-CONTAINING PROTEIN 4, CHLOROPLASTIC"/>
    <property type="match status" value="1"/>
</dbReference>
<dbReference type="PANTHER" id="PTHR47377:SF1">
    <property type="entry name" value="RHODANESE-LIKE DOMAIN-CONTAINING PROTEIN 4, CHLOROPLASTIC"/>
    <property type="match status" value="1"/>
</dbReference>
<dbReference type="Pfam" id="PF00581">
    <property type="entry name" value="Rhodanese"/>
    <property type="match status" value="1"/>
</dbReference>
<dbReference type="SMART" id="SM00450">
    <property type="entry name" value="RHOD"/>
    <property type="match status" value="1"/>
</dbReference>
<dbReference type="SUPFAM" id="SSF52821">
    <property type="entry name" value="Rhodanese/Cell cycle control phosphatase"/>
    <property type="match status" value="1"/>
</dbReference>
<dbReference type="PROSITE" id="PS50206">
    <property type="entry name" value="RHODANESE_3"/>
    <property type="match status" value="1"/>
</dbReference>
<evidence type="ECO:0000255" key="1">
    <source>
        <dbReference type="PROSITE-ProRule" id="PRU00173"/>
    </source>
</evidence>
<accession>Q9AKI4</accession>
<organism>
    <name type="scientific">Rickettsia rickettsii</name>
    <dbReference type="NCBI Taxonomy" id="783"/>
    <lineage>
        <taxon>Bacteria</taxon>
        <taxon>Pseudomonadati</taxon>
        <taxon>Pseudomonadota</taxon>
        <taxon>Alphaproteobacteria</taxon>
        <taxon>Rickettsiales</taxon>
        <taxon>Rickettsiaceae</taxon>
        <taxon>Rickettsieae</taxon>
        <taxon>Rickettsia</taxon>
        <taxon>spotted fever group</taxon>
    </lineage>
</organism>
<proteinExistence type="predicted"/>
<sequence length="123" mass="14454">MSVQNICSTKAYDMLISNDNAFLVDVRTREEWQQVGIPHLDNKNKMLFLSWQLNKDFEDNFLSIINDKIHAIIFFLCRSGYRSFIAANFITNIGYKNCYNISDGFEGNNQDKGWKQNNLPWQF</sequence>
<name>Y600_RICRI</name>
<reference key="1">
    <citation type="journal article" date="2001" name="Mol. Biol. Evol.">
        <title>Pseudogenes, junk DNA, and the dynamics of Rickettsia genomes.</title>
        <authorList>
            <person name="Andersson J.O."/>
            <person name="Andersson S.G.E."/>
        </authorList>
    </citation>
    <scope>NUCLEOTIDE SEQUENCE [GENOMIC DNA]</scope>
    <source>
        <strain>84-21C</strain>
    </source>
</reference>